<name>BPM3_ARATH</name>
<keyword id="KW-0025">Alternative splicing</keyword>
<keyword id="KW-0963">Cytoplasm</keyword>
<keyword id="KW-0539">Nucleus</keyword>
<keyword id="KW-1185">Reference proteome</keyword>
<comment type="function">
    <text evidence="3">May act as a substrate-specific adapter of an E3 ubiquitin-protein ligase complex (CUL3-RBX1-BTB) which mediates the ubiquitination and subsequent proteasomal degradation of target proteins.</text>
</comment>
<comment type="pathway">
    <text evidence="3">Protein modification; protein ubiquitination.</text>
</comment>
<comment type="subunit">
    <text evidence="3 4 5 6">Homodimer or heterodimer with BPM3 and BPM5. Interacts with CUL3A and CUL3B. Interacts with RAP2-4 and RAP2-13. Binds to MYB56 at the promoter of FLOWERING LOCUS T (FT) (PubMed:25343985).</text>
</comment>
<comment type="interaction">
    <interactant intactId="EBI-540923">
        <id>O22286</id>
    </interactant>
    <interactant intactId="EBI-25518624">
        <id>Q9FWW2</id>
        <label>At1g12120</label>
    </interactant>
    <organismsDiffer>false</organismsDiffer>
    <experiments>3</experiments>
</comment>
<comment type="interaction">
    <interactant intactId="EBI-540923">
        <id>O22286</id>
    </interactant>
    <interactant intactId="EBI-25510940">
        <id>F4JUM1</id>
        <label>ATSEC23F</label>
    </interactant>
    <organismsDiffer>false</organismsDiffer>
    <experiments>4</experiments>
</comment>
<comment type="interaction">
    <interactant intactId="EBI-540923">
        <id>O22286</id>
    </interactant>
    <interactant intactId="EBI-540923">
        <id>O22286</id>
        <label>BPM3</label>
    </interactant>
    <organismsDiffer>false</organismsDiffer>
    <experiments>5</experiments>
</comment>
<comment type="interaction">
    <interactant intactId="EBI-540923">
        <id>O22286</id>
    </interactant>
    <interactant intactId="EBI-942713">
        <id>B9DGI8</id>
        <label>BZIP63</label>
    </interactant>
    <organismsDiffer>false</organismsDiffer>
    <experiments>3</experiments>
</comment>
<comment type="interaction">
    <interactant intactId="EBI-540923">
        <id>O22286</id>
    </interactant>
    <interactant intactId="EBI-531362">
        <id>Q9ZVH4</id>
        <label>CUL3A</label>
    </interactant>
    <organismsDiffer>false</organismsDiffer>
    <experiments>3</experiments>
</comment>
<comment type="interaction">
    <interactant intactId="EBI-540923">
        <id>O22286</id>
    </interactant>
    <interactant intactId="EBI-7529041">
        <id>O65665</id>
        <label>ERF060</label>
    </interactant>
    <organismsDiffer>false</organismsDiffer>
    <experiments>3</experiments>
</comment>
<comment type="interaction">
    <interactant intactId="EBI-540923">
        <id>O22286</id>
    </interactant>
    <interactant intactId="EBI-2000137">
        <id>Q9MAI5</id>
        <label>ERF8</label>
    </interactant>
    <organismsDiffer>false</organismsDiffer>
    <experiments>3</experiments>
</comment>
<comment type="interaction">
    <interactant intactId="EBI-540923">
        <id>O22286</id>
    </interactant>
    <interactant intactId="EBI-4458381">
        <id>O49653</id>
        <label>GCP2</label>
    </interactant>
    <organismsDiffer>false</organismsDiffer>
    <experiments>4</experiments>
</comment>
<comment type="interaction">
    <interactant intactId="EBI-540923">
        <id>O22286</id>
    </interactant>
    <interactant intactId="EBI-4457746">
        <id>Q9LV52</id>
        <label>HSFC1</label>
    </interactant>
    <organismsDiffer>false</organismsDiffer>
    <experiments>5</experiments>
</comment>
<comment type="interaction">
    <interactant intactId="EBI-540923">
        <id>O22286</id>
    </interactant>
    <interactant intactId="EBI-626200">
        <id>Q9SWI1</id>
        <label>PKS1</label>
    </interactant>
    <organismsDiffer>false</organismsDiffer>
    <experiments>3</experiments>
</comment>
<comment type="interaction">
    <interactant intactId="EBI-540923">
        <id>O22286</id>
    </interactant>
    <interactant intactId="EBI-7528315">
        <id>Q8H1E4</id>
        <label>RAP2-4</label>
    </interactant>
    <organismsDiffer>false</organismsDiffer>
    <experiments>2</experiments>
</comment>
<comment type="subcellular location">
    <subcellularLocation>
        <location evidence="5">Nucleus</location>
    </subcellularLocation>
    <subcellularLocation>
        <location evidence="5">Cytoplasm</location>
    </subcellularLocation>
</comment>
<comment type="alternative products">
    <event type="alternative splicing"/>
    <isoform>
        <id>O22286-1</id>
        <name>1</name>
        <sequence type="displayed"/>
    </isoform>
    <isoform>
        <id>O22286-2</id>
        <name>2</name>
        <sequence type="described" ref="VSP_040655 VSP_040656"/>
    </isoform>
</comment>
<comment type="tissue specificity">
    <text evidence="3 5">Ubiquitous.</text>
</comment>
<comment type="domain">
    <text evidence="3">The BTB/POZ domain mediates the interaction with some component of ubiquitin ligase complexes.</text>
</comment>
<comment type="miscellaneous">
    <molecule>Isoform 2</molecule>
    <text evidence="9">May be due to intron retention.</text>
</comment>
<comment type="similarity">
    <text evidence="9">Belongs to the Tdpoz family.</text>
</comment>
<organism>
    <name type="scientific">Arabidopsis thaliana</name>
    <name type="common">Mouse-ear cress</name>
    <dbReference type="NCBI Taxonomy" id="3702"/>
    <lineage>
        <taxon>Eukaryota</taxon>
        <taxon>Viridiplantae</taxon>
        <taxon>Streptophyta</taxon>
        <taxon>Embryophyta</taxon>
        <taxon>Tracheophyta</taxon>
        <taxon>Spermatophyta</taxon>
        <taxon>Magnoliopsida</taxon>
        <taxon>eudicotyledons</taxon>
        <taxon>Gunneridae</taxon>
        <taxon>Pentapetalae</taxon>
        <taxon>rosids</taxon>
        <taxon>malvids</taxon>
        <taxon>Brassicales</taxon>
        <taxon>Brassicaceae</taxon>
        <taxon>Camelineae</taxon>
        <taxon>Arabidopsis</taxon>
    </lineage>
</organism>
<protein>
    <recommendedName>
        <fullName evidence="7">BTB/POZ and MATH domain-containing protein 3</fullName>
    </recommendedName>
    <alternativeName>
        <fullName evidence="7">Protein BTB-POZ AND MATH DOMAIN 3</fullName>
        <shortName evidence="7">AtBPM3</shortName>
    </alternativeName>
</protein>
<sequence>MSTVGGIEQLIPDSVSTSFIETVNGSHQFTIQGYSLAKGMSPGKFIQSDIFSVGGYDWAIYFYPDGKNPEDQSSYISLFIALASDSNDIRALFELTLMDQSGKGKHKVHSHFDRALEGGPYTLKYKGSMWGYKRFFKRSALETSDYLKDDCLVINCTVGVVRARLEGPKQYGIVLPLSNMGQGLKDLLDSEVGCDIAFQVGDETYKAHKLILAARSPVFRAQFFGPIGNNNVDRIVIDDIEPSIFKAMLSFIYTDVLPNVHEITGSTSASSFTNMIQHLLAAADLYDLARLKILCEVLLCEKLDVDNVATTLALAEQHQFLQLKAFCLEFVASPANLGAVMKSEGFKHLKQSCPTLLSELLNTVAAADKSSTSGQSNKKRSASSVLGCDTTNVRQLRRRTRKEVRAVS</sequence>
<gene>
    <name evidence="7" type="primary">BPM3</name>
    <name evidence="10" type="ordered locus">At2g39760</name>
    <name evidence="11" type="ORF">T5I7.6</name>
</gene>
<proteinExistence type="evidence at protein level"/>
<accession>O22286</accession>
<accession>Q2V416</accession>
<accession>Q8L977</accession>
<evidence type="ECO:0000255" key="1">
    <source>
        <dbReference type="PROSITE-ProRule" id="PRU00037"/>
    </source>
</evidence>
<evidence type="ECO:0000255" key="2">
    <source>
        <dbReference type="PROSITE-ProRule" id="PRU00129"/>
    </source>
</evidence>
<evidence type="ECO:0000269" key="3">
    <source>
    </source>
</evidence>
<evidence type="ECO:0000269" key="4">
    <source>
    </source>
</evidence>
<evidence type="ECO:0000269" key="5">
    <source>
    </source>
</evidence>
<evidence type="ECO:0000269" key="6">
    <source>
    </source>
</evidence>
<evidence type="ECO:0000303" key="7">
    <source>
    </source>
</evidence>
<evidence type="ECO:0000303" key="8">
    <source>
    </source>
</evidence>
<evidence type="ECO:0000305" key="9"/>
<evidence type="ECO:0000312" key="10">
    <source>
        <dbReference type="Araport" id="AT2G39760"/>
    </source>
</evidence>
<evidence type="ECO:0000312" key="11">
    <source>
        <dbReference type="EMBL" id="AAB87125.1"/>
    </source>
</evidence>
<feature type="chain" id="PRO_0000405267" description="BTB/POZ and MATH domain-containing protein 3">
    <location>
        <begin position="1"/>
        <end position="408"/>
    </location>
</feature>
<feature type="domain" description="MATH" evidence="2">
    <location>
        <begin position="24"/>
        <end position="158"/>
    </location>
</feature>
<feature type="domain" description="BTB" evidence="1">
    <location>
        <begin position="194"/>
        <end position="261"/>
    </location>
</feature>
<feature type="splice variant" id="VSP_040655" description="In isoform 2." evidence="8">
    <original>AVMKS</original>
    <variation>GTGCI</variation>
    <location>
        <begin position="339"/>
        <end position="343"/>
    </location>
</feature>
<feature type="splice variant" id="VSP_040656" description="In isoform 2." evidence="8">
    <location>
        <begin position="344"/>
        <end position="408"/>
    </location>
</feature>
<feature type="sequence conflict" description="In Ref. 5; AAM66127." evidence="9" ref="5">
    <original>E</original>
    <variation>K</variation>
    <location>
        <position position="329"/>
    </location>
</feature>
<feature type="sequence conflict" description="In Ref. 5; AAM66127." evidence="9" ref="5">
    <original>L</original>
    <variation>F</variation>
    <location>
        <position position="396"/>
    </location>
</feature>
<dbReference type="EMBL" id="AC003000">
    <property type="protein sequence ID" value="AAB87125.1"/>
    <property type="molecule type" value="Genomic_DNA"/>
</dbReference>
<dbReference type="EMBL" id="CP002685">
    <property type="protein sequence ID" value="AEC09719.1"/>
    <property type="molecule type" value="Genomic_DNA"/>
</dbReference>
<dbReference type="EMBL" id="CP002685">
    <property type="protein sequence ID" value="AEC09720.1"/>
    <property type="molecule type" value="Genomic_DNA"/>
</dbReference>
<dbReference type="EMBL" id="AY128315">
    <property type="protein sequence ID" value="AAM91518.1"/>
    <property type="molecule type" value="mRNA"/>
</dbReference>
<dbReference type="EMBL" id="BT000044">
    <property type="protein sequence ID" value="AAN15363.1"/>
    <property type="molecule type" value="mRNA"/>
</dbReference>
<dbReference type="EMBL" id="AK316691">
    <property type="protein sequence ID" value="BAH19418.1"/>
    <property type="molecule type" value="mRNA"/>
</dbReference>
<dbReference type="EMBL" id="AY088598">
    <property type="protein sequence ID" value="AAM66127.1"/>
    <property type="molecule type" value="mRNA"/>
</dbReference>
<dbReference type="PIR" id="T01006">
    <property type="entry name" value="T01006"/>
</dbReference>
<dbReference type="RefSeq" id="NP_001031516.1">
    <molecule id="O22286-2"/>
    <property type="nucleotide sequence ID" value="NM_001036439.2"/>
</dbReference>
<dbReference type="RefSeq" id="NP_030522.1">
    <molecule id="O22286-1"/>
    <property type="nucleotide sequence ID" value="NM_129534.4"/>
</dbReference>
<dbReference type="SMR" id="O22286"/>
<dbReference type="BioGRID" id="3899">
    <property type="interactions" value="43"/>
</dbReference>
<dbReference type="FunCoup" id="O22286">
    <property type="interactions" value="2177"/>
</dbReference>
<dbReference type="IntAct" id="O22286">
    <property type="interactions" value="35"/>
</dbReference>
<dbReference type="MINT" id="O22286"/>
<dbReference type="STRING" id="3702.O22286"/>
<dbReference type="PaxDb" id="3702-AT2G39760.1"/>
<dbReference type="ProteomicsDB" id="240502">
    <molecule id="O22286-1"/>
</dbReference>
<dbReference type="EnsemblPlants" id="AT2G39760.1">
    <molecule id="O22286-1"/>
    <property type="protein sequence ID" value="AT2G39760.1"/>
    <property type="gene ID" value="AT2G39760"/>
</dbReference>
<dbReference type="EnsemblPlants" id="AT2G39760.2">
    <molecule id="O22286-2"/>
    <property type="protein sequence ID" value="AT2G39760.2"/>
    <property type="gene ID" value="AT2G39760"/>
</dbReference>
<dbReference type="GeneID" id="818561"/>
<dbReference type="Gramene" id="AT2G39760.1">
    <molecule id="O22286-1"/>
    <property type="protein sequence ID" value="AT2G39760.1"/>
    <property type="gene ID" value="AT2G39760"/>
</dbReference>
<dbReference type="Gramene" id="AT2G39760.2">
    <molecule id="O22286-2"/>
    <property type="protein sequence ID" value="AT2G39760.2"/>
    <property type="gene ID" value="AT2G39760"/>
</dbReference>
<dbReference type="KEGG" id="ath:AT2G39760"/>
<dbReference type="Araport" id="AT2G39760"/>
<dbReference type="TAIR" id="AT2G39760">
    <property type="gene designation" value="BPM3"/>
</dbReference>
<dbReference type="eggNOG" id="KOG1987">
    <property type="taxonomic scope" value="Eukaryota"/>
</dbReference>
<dbReference type="InParanoid" id="O22286"/>
<dbReference type="OMA" id="IKFNYMW"/>
<dbReference type="OrthoDB" id="6359816at2759"/>
<dbReference type="PhylomeDB" id="O22286"/>
<dbReference type="UniPathway" id="UPA00143"/>
<dbReference type="PRO" id="PR:O22286"/>
<dbReference type="Proteomes" id="UP000006548">
    <property type="component" value="Chromosome 2"/>
</dbReference>
<dbReference type="ExpressionAtlas" id="O22286">
    <property type="expression patterns" value="baseline and differential"/>
</dbReference>
<dbReference type="GO" id="GO:0005829">
    <property type="term" value="C:cytosol"/>
    <property type="evidence" value="ECO:0000314"/>
    <property type="project" value="TAIR"/>
</dbReference>
<dbReference type="GO" id="GO:0005634">
    <property type="term" value="C:nucleus"/>
    <property type="evidence" value="ECO:0000314"/>
    <property type="project" value="TAIR"/>
</dbReference>
<dbReference type="GO" id="GO:0042802">
    <property type="term" value="F:identical protein binding"/>
    <property type="evidence" value="ECO:0000353"/>
    <property type="project" value="UniProtKB"/>
</dbReference>
<dbReference type="GO" id="GO:0071472">
    <property type="term" value="P:cellular response to salt stress"/>
    <property type="evidence" value="ECO:0000270"/>
    <property type="project" value="TAIR"/>
</dbReference>
<dbReference type="GO" id="GO:0016567">
    <property type="term" value="P:protein ubiquitination"/>
    <property type="evidence" value="ECO:0007669"/>
    <property type="project" value="UniProtKB-UniPathway"/>
</dbReference>
<dbReference type="GO" id="GO:0031396">
    <property type="term" value="P:regulation of protein ubiquitination"/>
    <property type="evidence" value="ECO:0000315"/>
    <property type="project" value="TAIR"/>
</dbReference>
<dbReference type="GO" id="GO:0006970">
    <property type="term" value="P:response to osmotic stress"/>
    <property type="evidence" value="ECO:0000270"/>
    <property type="project" value="TAIR"/>
</dbReference>
<dbReference type="CDD" id="cd14736">
    <property type="entry name" value="BACK_AtBPM-like"/>
    <property type="match status" value="1"/>
</dbReference>
<dbReference type="CDD" id="cd18280">
    <property type="entry name" value="BTB_POZ_BPM_plant"/>
    <property type="match status" value="1"/>
</dbReference>
<dbReference type="CDD" id="cd00121">
    <property type="entry name" value="MATH"/>
    <property type="match status" value="1"/>
</dbReference>
<dbReference type="FunFam" id="1.25.40.420:FF:000023">
    <property type="entry name" value="BTB-POZ and math domain 1"/>
    <property type="match status" value="1"/>
</dbReference>
<dbReference type="FunFam" id="3.30.710.10:FF:000136">
    <property type="entry name" value="BTB-POZ and math domain 1"/>
    <property type="match status" value="1"/>
</dbReference>
<dbReference type="Gene3D" id="1.25.40.420">
    <property type="match status" value="1"/>
</dbReference>
<dbReference type="Gene3D" id="2.60.210.10">
    <property type="entry name" value="Apoptosis, Tumor Necrosis Factor Receptor Associated Protein 2, Chain A"/>
    <property type="match status" value="1"/>
</dbReference>
<dbReference type="Gene3D" id="3.30.710.10">
    <property type="entry name" value="Potassium Channel Kv1.1, Chain A"/>
    <property type="match status" value="1"/>
</dbReference>
<dbReference type="InterPro" id="IPR056423">
    <property type="entry name" value="BACK_BPM_SPOP"/>
</dbReference>
<dbReference type="InterPro" id="IPR045005">
    <property type="entry name" value="BPM1-6"/>
</dbReference>
<dbReference type="InterPro" id="IPR034090">
    <property type="entry name" value="BPM_C"/>
</dbReference>
<dbReference type="InterPro" id="IPR000210">
    <property type="entry name" value="BTB/POZ_dom"/>
</dbReference>
<dbReference type="InterPro" id="IPR002083">
    <property type="entry name" value="MATH/TRAF_dom"/>
</dbReference>
<dbReference type="InterPro" id="IPR011333">
    <property type="entry name" value="SKP1/BTB/POZ_sf"/>
</dbReference>
<dbReference type="InterPro" id="IPR008974">
    <property type="entry name" value="TRAF-like"/>
</dbReference>
<dbReference type="PANTHER" id="PTHR26379">
    <property type="entry name" value="BTB/POZ AND MATH DOMAIN-CONTAINING PROTEIN 1"/>
    <property type="match status" value="1"/>
</dbReference>
<dbReference type="PANTHER" id="PTHR26379:SF293">
    <property type="entry name" value="BTB_POZ AND MATH DOMAIN-CONTAINING PROTEIN 3"/>
    <property type="match status" value="1"/>
</dbReference>
<dbReference type="Pfam" id="PF24570">
    <property type="entry name" value="BACK_BPM_SPOP"/>
    <property type="match status" value="1"/>
</dbReference>
<dbReference type="Pfam" id="PF00651">
    <property type="entry name" value="BTB"/>
    <property type="match status" value="1"/>
</dbReference>
<dbReference type="Pfam" id="PF22486">
    <property type="entry name" value="MATH_2"/>
    <property type="match status" value="1"/>
</dbReference>
<dbReference type="SMART" id="SM00225">
    <property type="entry name" value="BTB"/>
    <property type="match status" value="1"/>
</dbReference>
<dbReference type="SMART" id="SM00061">
    <property type="entry name" value="MATH"/>
    <property type="match status" value="1"/>
</dbReference>
<dbReference type="SUPFAM" id="SSF54695">
    <property type="entry name" value="POZ domain"/>
    <property type="match status" value="1"/>
</dbReference>
<dbReference type="SUPFAM" id="SSF49599">
    <property type="entry name" value="TRAF domain-like"/>
    <property type="match status" value="1"/>
</dbReference>
<dbReference type="PROSITE" id="PS50097">
    <property type="entry name" value="BTB"/>
    <property type="match status" value="1"/>
</dbReference>
<dbReference type="PROSITE" id="PS50144">
    <property type="entry name" value="MATH"/>
    <property type="match status" value="1"/>
</dbReference>
<reference key="1">
    <citation type="journal article" date="1999" name="Nature">
        <title>Sequence and analysis of chromosome 2 of the plant Arabidopsis thaliana.</title>
        <authorList>
            <person name="Lin X."/>
            <person name="Kaul S."/>
            <person name="Rounsley S.D."/>
            <person name="Shea T.P."/>
            <person name="Benito M.-I."/>
            <person name="Town C.D."/>
            <person name="Fujii C.Y."/>
            <person name="Mason T.M."/>
            <person name="Bowman C.L."/>
            <person name="Barnstead M.E."/>
            <person name="Feldblyum T.V."/>
            <person name="Buell C.R."/>
            <person name="Ketchum K.A."/>
            <person name="Lee J.J."/>
            <person name="Ronning C.M."/>
            <person name="Koo H.L."/>
            <person name="Moffat K.S."/>
            <person name="Cronin L.A."/>
            <person name="Shen M."/>
            <person name="Pai G."/>
            <person name="Van Aken S."/>
            <person name="Umayam L."/>
            <person name="Tallon L.J."/>
            <person name="Gill J.E."/>
            <person name="Adams M.D."/>
            <person name="Carrera A.J."/>
            <person name="Creasy T.H."/>
            <person name="Goodman H.M."/>
            <person name="Somerville C.R."/>
            <person name="Copenhaver G.P."/>
            <person name="Preuss D."/>
            <person name="Nierman W.C."/>
            <person name="White O."/>
            <person name="Eisen J.A."/>
            <person name="Salzberg S.L."/>
            <person name="Fraser C.M."/>
            <person name="Venter J.C."/>
        </authorList>
    </citation>
    <scope>NUCLEOTIDE SEQUENCE [LARGE SCALE GENOMIC DNA]</scope>
    <source>
        <strain>cv. Columbia</strain>
    </source>
</reference>
<reference key="2">
    <citation type="journal article" date="2017" name="Plant J.">
        <title>Araport11: a complete reannotation of the Arabidopsis thaliana reference genome.</title>
        <authorList>
            <person name="Cheng C.Y."/>
            <person name="Krishnakumar V."/>
            <person name="Chan A.P."/>
            <person name="Thibaud-Nissen F."/>
            <person name="Schobel S."/>
            <person name="Town C.D."/>
        </authorList>
    </citation>
    <scope>GENOME REANNOTATION</scope>
    <source>
        <strain>cv. Columbia</strain>
    </source>
</reference>
<reference key="3">
    <citation type="journal article" date="2003" name="Science">
        <title>Empirical analysis of transcriptional activity in the Arabidopsis genome.</title>
        <authorList>
            <person name="Yamada K."/>
            <person name="Lim J."/>
            <person name="Dale J.M."/>
            <person name="Chen H."/>
            <person name="Shinn P."/>
            <person name="Palm C.J."/>
            <person name="Southwick A.M."/>
            <person name="Wu H.C."/>
            <person name="Kim C.J."/>
            <person name="Nguyen M."/>
            <person name="Pham P.K."/>
            <person name="Cheuk R.F."/>
            <person name="Karlin-Newmann G."/>
            <person name="Liu S.X."/>
            <person name="Lam B."/>
            <person name="Sakano H."/>
            <person name="Wu T."/>
            <person name="Yu G."/>
            <person name="Miranda M."/>
            <person name="Quach H.L."/>
            <person name="Tripp M."/>
            <person name="Chang C.H."/>
            <person name="Lee J.M."/>
            <person name="Toriumi M.J."/>
            <person name="Chan M.M."/>
            <person name="Tang C.C."/>
            <person name="Onodera C.S."/>
            <person name="Deng J.M."/>
            <person name="Akiyama K."/>
            <person name="Ansari Y."/>
            <person name="Arakawa T."/>
            <person name="Banh J."/>
            <person name="Banno F."/>
            <person name="Bowser L."/>
            <person name="Brooks S.Y."/>
            <person name="Carninci P."/>
            <person name="Chao Q."/>
            <person name="Choy N."/>
            <person name="Enju A."/>
            <person name="Goldsmith A.D."/>
            <person name="Gurjal M."/>
            <person name="Hansen N.F."/>
            <person name="Hayashizaki Y."/>
            <person name="Johnson-Hopson C."/>
            <person name="Hsuan V.W."/>
            <person name="Iida K."/>
            <person name="Karnes M."/>
            <person name="Khan S."/>
            <person name="Koesema E."/>
            <person name="Ishida J."/>
            <person name="Jiang P.X."/>
            <person name="Jones T."/>
            <person name="Kawai J."/>
            <person name="Kamiya A."/>
            <person name="Meyers C."/>
            <person name="Nakajima M."/>
            <person name="Narusaka M."/>
            <person name="Seki M."/>
            <person name="Sakurai T."/>
            <person name="Satou M."/>
            <person name="Tamse R."/>
            <person name="Vaysberg M."/>
            <person name="Wallender E.K."/>
            <person name="Wong C."/>
            <person name="Yamamura Y."/>
            <person name="Yuan S."/>
            <person name="Shinozaki K."/>
            <person name="Davis R.W."/>
            <person name="Theologis A."/>
            <person name="Ecker J.R."/>
        </authorList>
    </citation>
    <scope>NUCLEOTIDE SEQUENCE [LARGE SCALE MRNA] (ISOFORM 1)</scope>
    <source>
        <strain>cv. Columbia</strain>
    </source>
</reference>
<reference key="4">
    <citation type="journal article" date="2009" name="DNA Res.">
        <title>Analysis of multiple occurrences of alternative splicing events in Arabidopsis thaliana using novel sequenced full-length cDNAs.</title>
        <authorList>
            <person name="Iida K."/>
            <person name="Fukami-Kobayashi K."/>
            <person name="Toyoda A."/>
            <person name="Sakaki Y."/>
            <person name="Kobayashi M."/>
            <person name="Seki M."/>
            <person name="Shinozaki K."/>
        </authorList>
    </citation>
    <scope>NUCLEOTIDE SEQUENCE [LARGE SCALE MRNA] (ISOFORM 2)</scope>
    <source>
        <strain>cv. Columbia</strain>
        <tissue>Rosette leaf</tissue>
    </source>
</reference>
<reference key="5">
    <citation type="submission" date="2002-03" db="EMBL/GenBank/DDBJ databases">
        <title>Full-length cDNA from Arabidopsis thaliana.</title>
        <authorList>
            <person name="Brover V.V."/>
            <person name="Troukhan M.E."/>
            <person name="Alexandrov N.A."/>
            <person name="Lu Y.-P."/>
            <person name="Flavell R.B."/>
            <person name="Feldmann K.A."/>
        </authorList>
    </citation>
    <scope>NUCLEOTIDE SEQUENCE [LARGE SCALE MRNA] (ISOFORM 1)</scope>
</reference>
<reference key="6">
    <citation type="journal article" date="2004" name="Gene">
        <title>TDPOZ, a family of bipartite animal and plant proteins that contain the TRAF (TD) and POZ/BTB domains.</title>
        <authorList>
            <person name="Huang C.-J."/>
            <person name="Chen C.-Y."/>
            <person name="Chen H.-H."/>
            <person name="Tsai S.-F."/>
            <person name="Choo K.-B."/>
        </authorList>
    </citation>
    <scope>GENE FAMILY</scope>
</reference>
<reference key="7">
    <citation type="journal article" date="2005" name="Plant Cell">
        <title>Arabidopsis has two redundant Cullin3 proteins that are essential for embryo development and that interact with RBX1 and BTB proteins to form multisubunit E3 ubiquitin ligase complexes in vivo.</title>
        <authorList>
            <person name="Figueroa P."/>
            <person name="Gusmaroli G."/>
            <person name="Serino G."/>
            <person name="Habashi J."/>
            <person name="Ma L."/>
            <person name="Shen Y."/>
            <person name="Feng S."/>
            <person name="Bostick M."/>
            <person name="Callis J."/>
            <person name="Hellmann H."/>
            <person name="Deng X.W."/>
        </authorList>
    </citation>
    <scope>INTERACTION WITH CUL3A</scope>
</reference>
<reference key="8">
    <citation type="journal article" date="2005" name="Plant Physiol.">
        <title>Arabidopsis AtCUL3a and AtCUL3b form complexes with members of the BTB/POZ-MATH protein family.</title>
        <authorList>
            <person name="Weber H."/>
            <person name="Bernhardt A."/>
            <person name="Dieterle M."/>
            <person name="Hano P."/>
            <person name="Mutlu A."/>
            <person name="Estelle M."/>
            <person name="Genschik P."/>
            <person name="Hellmann H."/>
        </authorList>
    </citation>
    <scope>GENE FAMILY</scope>
    <scope>NOMENCLATURE</scope>
    <scope>FUNCTION</scope>
    <scope>IDENTIFICATION IN THE CUL3-RBX1-BTB UBIQUITIN-PROTEIN LIGASE COMPLEX</scope>
    <scope>INTERACTION WITH CUL3A AND CUL3B</scope>
    <scope>SUBUNIT</scope>
    <scope>TISSUE SPECIFICITY</scope>
    <scope>PATHWAY</scope>
    <scope>DOMAIN</scope>
</reference>
<reference key="9">
    <citation type="journal article" date="2009" name="FEBS J.">
        <title>Arabidopsis thaliana BTB/ POZ-MATH proteins interact with members of the ERF/AP2 transcription factor family.</title>
        <authorList>
            <person name="Weber H."/>
            <person name="Hellmann H."/>
        </authorList>
    </citation>
    <scope>INTERACTION WITH RAP2-4 AND RAP2-13</scope>
    <scope>TISSUE SPECIFICITY</scope>
    <scope>SUBCELLULAR LOCATION</scope>
</reference>
<reference key="10">
    <citation type="journal article" date="2014" name="Mol. Plant">
        <title>Identification of Arabidopsis MYB56 as a novel substrate for CRL3BPM E3 ligases.</title>
        <authorList>
            <person name="Chen L."/>
            <person name="Bernhardt A."/>
            <person name="Lee J."/>
            <person name="Hellmann H."/>
        </authorList>
    </citation>
    <scope>INTERACTION WITH MYB56</scope>
    <source>
        <strain>cv. Columbia</strain>
    </source>
</reference>